<protein>
    <recommendedName>
        <fullName evidence="1">Serine/threonine transporter SstT</fullName>
    </recommendedName>
    <alternativeName>
        <fullName evidence="1">Na(+)/serine-threonine symporter</fullName>
    </alternativeName>
</protein>
<sequence length="414" mass="43427">MATQRASGLLQRLAQGSLVKQILVGLILGILLAWISKPAAEAVGLLGTLFVGALKAVAPVLVLMLVMASIANHQHGQKTNIRPILFLYLLGTFSAALAAVVFSFAFPSTLHLSSSAQDIVPPSGIVEVLRGLLMSMVSNPIDALLNANYIGILVWAVGLGFALRHGNETTKNLVNDMSNAVTFMVKLVIRFAPVGIFGLVSSTLATTGFSTLWGYAHLLVVLIGCMLLVALVVNPLLVFWKIRRNPYPLVFACLRESGVYAFFTRSSAANIPVNMALCEKLNLDRDTYSVSIPLGATINMAGAAITITVLTLAAVHTLGVPVDLPTALLLSVVASLCACGASGVAGGSLLLIPLACNMFGIPNDIAMQVVAVGFIIGVLQDSCETALNSSTDVLFTAAACQAEDERLANNALRS</sequence>
<feature type="chain" id="PRO_1000197559" description="Serine/threonine transporter SstT">
    <location>
        <begin position="1"/>
        <end position="414"/>
    </location>
</feature>
<feature type="transmembrane region" description="Helical" evidence="1">
    <location>
        <begin position="16"/>
        <end position="36"/>
    </location>
</feature>
<feature type="transmembrane region" description="Helical" evidence="1">
    <location>
        <begin position="46"/>
        <end position="66"/>
    </location>
</feature>
<feature type="transmembrane region" description="Helical" evidence="1">
    <location>
        <begin position="84"/>
        <end position="104"/>
    </location>
</feature>
<feature type="transmembrane region" description="Helical" evidence="1">
    <location>
        <begin position="143"/>
        <end position="163"/>
    </location>
</feature>
<feature type="transmembrane region" description="Helical" evidence="1">
    <location>
        <begin position="180"/>
        <end position="200"/>
    </location>
</feature>
<feature type="transmembrane region" description="Helical" evidence="1">
    <location>
        <begin position="219"/>
        <end position="239"/>
    </location>
</feature>
<feature type="transmembrane region" description="Helical" evidence="1">
    <location>
        <begin position="300"/>
        <end position="320"/>
    </location>
</feature>
<feature type="transmembrane region" description="Helical" evidence="1">
    <location>
        <begin position="332"/>
        <end position="352"/>
    </location>
</feature>
<dbReference type="EMBL" id="CP001144">
    <property type="protein sequence ID" value="ACH76235.1"/>
    <property type="molecule type" value="Genomic_DNA"/>
</dbReference>
<dbReference type="RefSeq" id="WP_000235358.1">
    <property type="nucleotide sequence ID" value="NC_011205.1"/>
</dbReference>
<dbReference type="SMR" id="B5FHW0"/>
<dbReference type="KEGG" id="sed:SeD_A3582"/>
<dbReference type="HOGENOM" id="CLU_044581_0_0_6"/>
<dbReference type="Proteomes" id="UP000008322">
    <property type="component" value="Chromosome"/>
</dbReference>
<dbReference type="GO" id="GO:0005886">
    <property type="term" value="C:plasma membrane"/>
    <property type="evidence" value="ECO:0007669"/>
    <property type="project" value="UniProtKB-SubCell"/>
</dbReference>
<dbReference type="GO" id="GO:0005295">
    <property type="term" value="F:neutral L-amino acid:sodium symporter activity"/>
    <property type="evidence" value="ECO:0007669"/>
    <property type="project" value="TreeGrafter"/>
</dbReference>
<dbReference type="GO" id="GO:0032329">
    <property type="term" value="P:serine transport"/>
    <property type="evidence" value="ECO:0007669"/>
    <property type="project" value="InterPro"/>
</dbReference>
<dbReference type="GO" id="GO:0015826">
    <property type="term" value="P:threonine transport"/>
    <property type="evidence" value="ECO:0007669"/>
    <property type="project" value="InterPro"/>
</dbReference>
<dbReference type="FunFam" id="1.10.3860.10:FF:000003">
    <property type="entry name" value="Serine/threonine transporter sstT"/>
    <property type="match status" value="1"/>
</dbReference>
<dbReference type="Gene3D" id="1.10.3860.10">
    <property type="entry name" value="Sodium:dicarboxylate symporter"/>
    <property type="match status" value="1"/>
</dbReference>
<dbReference type="HAMAP" id="MF_01582">
    <property type="entry name" value="Ser_Thr_transp_SstT"/>
    <property type="match status" value="1"/>
</dbReference>
<dbReference type="InterPro" id="IPR001991">
    <property type="entry name" value="Na-dicarboxylate_symporter"/>
</dbReference>
<dbReference type="InterPro" id="IPR036458">
    <property type="entry name" value="Na:dicarbo_symporter_sf"/>
</dbReference>
<dbReference type="InterPro" id="IPR023025">
    <property type="entry name" value="Ser_Thr_transp_SstT"/>
</dbReference>
<dbReference type="NCBIfam" id="NF010151">
    <property type="entry name" value="PRK13628.1"/>
    <property type="match status" value="1"/>
</dbReference>
<dbReference type="PANTHER" id="PTHR42865">
    <property type="entry name" value="PROTON/GLUTAMATE-ASPARTATE SYMPORTER"/>
    <property type="match status" value="1"/>
</dbReference>
<dbReference type="PANTHER" id="PTHR42865:SF8">
    <property type="entry name" value="SERINE_THREONINE TRANSPORTER SSTT"/>
    <property type="match status" value="1"/>
</dbReference>
<dbReference type="Pfam" id="PF00375">
    <property type="entry name" value="SDF"/>
    <property type="match status" value="1"/>
</dbReference>
<dbReference type="PRINTS" id="PR00173">
    <property type="entry name" value="EDTRNSPORT"/>
</dbReference>
<dbReference type="SUPFAM" id="SSF118215">
    <property type="entry name" value="Proton glutamate symport protein"/>
    <property type="match status" value="1"/>
</dbReference>
<dbReference type="PROSITE" id="PS00713">
    <property type="entry name" value="NA_DICARBOXYL_SYMP_1"/>
    <property type="match status" value="1"/>
</dbReference>
<comment type="function">
    <text evidence="1">Involved in the import of serine and threonine into the cell, with the concomitant import of sodium (symport system).</text>
</comment>
<comment type="catalytic activity">
    <reaction evidence="1">
        <text>L-serine(in) + Na(+)(in) = L-serine(out) + Na(+)(out)</text>
        <dbReference type="Rhea" id="RHEA:29575"/>
        <dbReference type="ChEBI" id="CHEBI:29101"/>
        <dbReference type="ChEBI" id="CHEBI:33384"/>
    </reaction>
    <physiologicalReaction direction="right-to-left" evidence="1">
        <dbReference type="Rhea" id="RHEA:29577"/>
    </physiologicalReaction>
</comment>
<comment type="catalytic activity">
    <reaction evidence="1">
        <text>L-threonine(in) + Na(+)(in) = L-threonine(out) + Na(+)(out)</text>
        <dbReference type="Rhea" id="RHEA:69999"/>
        <dbReference type="ChEBI" id="CHEBI:29101"/>
        <dbReference type="ChEBI" id="CHEBI:57926"/>
    </reaction>
    <physiologicalReaction direction="right-to-left" evidence="1">
        <dbReference type="Rhea" id="RHEA:70001"/>
    </physiologicalReaction>
</comment>
<comment type="subcellular location">
    <subcellularLocation>
        <location evidence="1">Cell inner membrane</location>
        <topology evidence="1">Multi-pass membrane protein</topology>
    </subcellularLocation>
</comment>
<comment type="similarity">
    <text evidence="1">Belongs to the dicarboxylate/amino acid:cation symporter (DAACS) (TC 2.A.23) family.</text>
</comment>
<accession>B5FHW0</accession>
<evidence type="ECO:0000255" key="1">
    <source>
        <dbReference type="HAMAP-Rule" id="MF_01582"/>
    </source>
</evidence>
<keyword id="KW-0029">Amino-acid transport</keyword>
<keyword id="KW-0997">Cell inner membrane</keyword>
<keyword id="KW-1003">Cell membrane</keyword>
<keyword id="KW-0472">Membrane</keyword>
<keyword id="KW-0769">Symport</keyword>
<keyword id="KW-0812">Transmembrane</keyword>
<keyword id="KW-1133">Transmembrane helix</keyword>
<keyword id="KW-0813">Transport</keyword>
<reference key="1">
    <citation type="journal article" date="2011" name="J. Bacteriol.">
        <title>Comparative genomics of 28 Salmonella enterica isolates: evidence for CRISPR-mediated adaptive sublineage evolution.</title>
        <authorList>
            <person name="Fricke W.F."/>
            <person name="Mammel M.K."/>
            <person name="McDermott P.F."/>
            <person name="Tartera C."/>
            <person name="White D.G."/>
            <person name="Leclerc J.E."/>
            <person name="Ravel J."/>
            <person name="Cebula T.A."/>
        </authorList>
    </citation>
    <scope>NUCLEOTIDE SEQUENCE [LARGE SCALE GENOMIC DNA]</scope>
    <source>
        <strain>CT_02021853</strain>
    </source>
</reference>
<gene>
    <name evidence="1" type="primary">sstT</name>
    <name type="ordered locus">SeD_A3582</name>
</gene>
<organism>
    <name type="scientific">Salmonella dublin (strain CT_02021853)</name>
    <dbReference type="NCBI Taxonomy" id="439851"/>
    <lineage>
        <taxon>Bacteria</taxon>
        <taxon>Pseudomonadati</taxon>
        <taxon>Pseudomonadota</taxon>
        <taxon>Gammaproteobacteria</taxon>
        <taxon>Enterobacterales</taxon>
        <taxon>Enterobacteriaceae</taxon>
        <taxon>Salmonella</taxon>
    </lineage>
</organism>
<name>SSTT_SALDC</name>
<proteinExistence type="inferred from homology"/>